<accession>Q9D7J9</accession>
<accession>Q99LV0</accession>
<organism>
    <name type="scientific">Mus musculus</name>
    <name type="common">Mouse</name>
    <dbReference type="NCBI Taxonomy" id="10090"/>
    <lineage>
        <taxon>Eukaryota</taxon>
        <taxon>Metazoa</taxon>
        <taxon>Chordata</taxon>
        <taxon>Craniata</taxon>
        <taxon>Vertebrata</taxon>
        <taxon>Euteleostomi</taxon>
        <taxon>Mammalia</taxon>
        <taxon>Eutheria</taxon>
        <taxon>Euarchontoglires</taxon>
        <taxon>Glires</taxon>
        <taxon>Rodentia</taxon>
        <taxon>Myomorpha</taxon>
        <taxon>Muroidea</taxon>
        <taxon>Muridae</taxon>
        <taxon>Murinae</taxon>
        <taxon>Mus</taxon>
        <taxon>Mus</taxon>
    </lineage>
</organism>
<reference key="1">
    <citation type="journal article" date="2005" name="Science">
        <title>The transcriptional landscape of the mammalian genome.</title>
        <authorList>
            <person name="Carninci P."/>
            <person name="Kasukawa T."/>
            <person name="Katayama S."/>
            <person name="Gough J."/>
            <person name="Frith M.C."/>
            <person name="Maeda N."/>
            <person name="Oyama R."/>
            <person name="Ravasi T."/>
            <person name="Lenhard B."/>
            <person name="Wells C."/>
            <person name="Kodzius R."/>
            <person name="Shimokawa K."/>
            <person name="Bajic V.B."/>
            <person name="Brenner S.E."/>
            <person name="Batalov S."/>
            <person name="Forrest A.R."/>
            <person name="Zavolan M."/>
            <person name="Davis M.J."/>
            <person name="Wilming L.G."/>
            <person name="Aidinis V."/>
            <person name="Allen J.E."/>
            <person name="Ambesi-Impiombato A."/>
            <person name="Apweiler R."/>
            <person name="Aturaliya R.N."/>
            <person name="Bailey T.L."/>
            <person name="Bansal M."/>
            <person name="Baxter L."/>
            <person name="Beisel K.W."/>
            <person name="Bersano T."/>
            <person name="Bono H."/>
            <person name="Chalk A.M."/>
            <person name="Chiu K.P."/>
            <person name="Choudhary V."/>
            <person name="Christoffels A."/>
            <person name="Clutterbuck D.R."/>
            <person name="Crowe M.L."/>
            <person name="Dalla E."/>
            <person name="Dalrymple B.P."/>
            <person name="de Bono B."/>
            <person name="Della Gatta G."/>
            <person name="di Bernardo D."/>
            <person name="Down T."/>
            <person name="Engstrom P."/>
            <person name="Fagiolini M."/>
            <person name="Faulkner G."/>
            <person name="Fletcher C.F."/>
            <person name="Fukushima T."/>
            <person name="Furuno M."/>
            <person name="Futaki S."/>
            <person name="Gariboldi M."/>
            <person name="Georgii-Hemming P."/>
            <person name="Gingeras T.R."/>
            <person name="Gojobori T."/>
            <person name="Green R.E."/>
            <person name="Gustincich S."/>
            <person name="Harbers M."/>
            <person name="Hayashi Y."/>
            <person name="Hensch T.K."/>
            <person name="Hirokawa N."/>
            <person name="Hill D."/>
            <person name="Huminiecki L."/>
            <person name="Iacono M."/>
            <person name="Ikeo K."/>
            <person name="Iwama A."/>
            <person name="Ishikawa T."/>
            <person name="Jakt M."/>
            <person name="Kanapin A."/>
            <person name="Katoh M."/>
            <person name="Kawasawa Y."/>
            <person name="Kelso J."/>
            <person name="Kitamura H."/>
            <person name="Kitano H."/>
            <person name="Kollias G."/>
            <person name="Krishnan S.P."/>
            <person name="Kruger A."/>
            <person name="Kummerfeld S.K."/>
            <person name="Kurochkin I.V."/>
            <person name="Lareau L.F."/>
            <person name="Lazarevic D."/>
            <person name="Lipovich L."/>
            <person name="Liu J."/>
            <person name="Liuni S."/>
            <person name="McWilliam S."/>
            <person name="Madan Babu M."/>
            <person name="Madera M."/>
            <person name="Marchionni L."/>
            <person name="Matsuda H."/>
            <person name="Matsuzawa S."/>
            <person name="Miki H."/>
            <person name="Mignone F."/>
            <person name="Miyake S."/>
            <person name="Morris K."/>
            <person name="Mottagui-Tabar S."/>
            <person name="Mulder N."/>
            <person name="Nakano N."/>
            <person name="Nakauchi H."/>
            <person name="Ng P."/>
            <person name="Nilsson R."/>
            <person name="Nishiguchi S."/>
            <person name="Nishikawa S."/>
            <person name="Nori F."/>
            <person name="Ohara O."/>
            <person name="Okazaki Y."/>
            <person name="Orlando V."/>
            <person name="Pang K.C."/>
            <person name="Pavan W.J."/>
            <person name="Pavesi G."/>
            <person name="Pesole G."/>
            <person name="Petrovsky N."/>
            <person name="Piazza S."/>
            <person name="Reed J."/>
            <person name="Reid J.F."/>
            <person name="Ring B.Z."/>
            <person name="Ringwald M."/>
            <person name="Rost B."/>
            <person name="Ruan Y."/>
            <person name="Salzberg S.L."/>
            <person name="Sandelin A."/>
            <person name="Schneider C."/>
            <person name="Schoenbach C."/>
            <person name="Sekiguchi K."/>
            <person name="Semple C.A."/>
            <person name="Seno S."/>
            <person name="Sessa L."/>
            <person name="Sheng Y."/>
            <person name="Shibata Y."/>
            <person name="Shimada H."/>
            <person name="Shimada K."/>
            <person name="Silva D."/>
            <person name="Sinclair B."/>
            <person name="Sperling S."/>
            <person name="Stupka E."/>
            <person name="Sugiura K."/>
            <person name="Sultana R."/>
            <person name="Takenaka Y."/>
            <person name="Taki K."/>
            <person name="Tammoja K."/>
            <person name="Tan S.L."/>
            <person name="Tang S."/>
            <person name="Taylor M.S."/>
            <person name="Tegner J."/>
            <person name="Teichmann S.A."/>
            <person name="Ueda H.R."/>
            <person name="van Nimwegen E."/>
            <person name="Verardo R."/>
            <person name="Wei C.L."/>
            <person name="Yagi K."/>
            <person name="Yamanishi H."/>
            <person name="Zabarovsky E."/>
            <person name="Zhu S."/>
            <person name="Zimmer A."/>
            <person name="Hide W."/>
            <person name="Bult C."/>
            <person name="Grimmond S.M."/>
            <person name="Teasdale R.D."/>
            <person name="Liu E.T."/>
            <person name="Brusic V."/>
            <person name="Quackenbush J."/>
            <person name="Wahlestedt C."/>
            <person name="Mattick J.S."/>
            <person name="Hume D.A."/>
            <person name="Kai C."/>
            <person name="Sasaki D."/>
            <person name="Tomaru Y."/>
            <person name="Fukuda S."/>
            <person name="Kanamori-Katayama M."/>
            <person name="Suzuki M."/>
            <person name="Aoki J."/>
            <person name="Arakawa T."/>
            <person name="Iida J."/>
            <person name="Imamura K."/>
            <person name="Itoh M."/>
            <person name="Kato T."/>
            <person name="Kawaji H."/>
            <person name="Kawagashira N."/>
            <person name="Kawashima T."/>
            <person name="Kojima M."/>
            <person name="Kondo S."/>
            <person name="Konno H."/>
            <person name="Nakano K."/>
            <person name="Ninomiya N."/>
            <person name="Nishio T."/>
            <person name="Okada M."/>
            <person name="Plessy C."/>
            <person name="Shibata K."/>
            <person name="Shiraki T."/>
            <person name="Suzuki S."/>
            <person name="Tagami M."/>
            <person name="Waki K."/>
            <person name="Watahiki A."/>
            <person name="Okamura-Oho Y."/>
            <person name="Suzuki H."/>
            <person name="Kawai J."/>
            <person name="Hayashizaki Y."/>
        </authorList>
    </citation>
    <scope>NUCLEOTIDE SEQUENCE [LARGE SCALE MRNA]</scope>
    <source>
        <strain>C57BL/6J</strain>
        <tissue>Tongue</tissue>
    </source>
</reference>
<reference key="2">
    <citation type="journal article" date="2009" name="PLoS Biol.">
        <title>Lineage-specific biology revealed by a finished genome assembly of the mouse.</title>
        <authorList>
            <person name="Church D.M."/>
            <person name="Goodstadt L."/>
            <person name="Hillier L.W."/>
            <person name="Zody M.C."/>
            <person name="Goldstein S."/>
            <person name="She X."/>
            <person name="Bult C.J."/>
            <person name="Agarwala R."/>
            <person name="Cherry J.L."/>
            <person name="DiCuccio M."/>
            <person name="Hlavina W."/>
            <person name="Kapustin Y."/>
            <person name="Meric P."/>
            <person name="Maglott D."/>
            <person name="Birtle Z."/>
            <person name="Marques A.C."/>
            <person name="Graves T."/>
            <person name="Zhou S."/>
            <person name="Teague B."/>
            <person name="Potamousis K."/>
            <person name="Churas C."/>
            <person name="Place M."/>
            <person name="Herschleb J."/>
            <person name="Runnheim R."/>
            <person name="Forrest D."/>
            <person name="Amos-Landgraf J."/>
            <person name="Schwartz D.C."/>
            <person name="Cheng Z."/>
            <person name="Lindblad-Toh K."/>
            <person name="Eichler E.E."/>
            <person name="Ponting C.P."/>
        </authorList>
    </citation>
    <scope>NUCLEOTIDE SEQUENCE [LARGE SCALE GENOMIC DNA]</scope>
    <source>
        <strain>C57BL/6J</strain>
    </source>
</reference>
<reference key="3">
    <citation type="journal article" date="2004" name="Genome Res.">
        <title>The status, quality, and expansion of the NIH full-length cDNA project: the Mammalian Gene Collection (MGC).</title>
        <authorList>
            <consortium name="The MGC Project Team"/>
        </authorList>
    </citation>
    <scope>NUCLEOTIDE SEQUENCE [LARGE SCALE MRNA]</scope>
    <source>
        <strain>C57BL/6J</strain>
        <strain>FVB/N</strain>
        <tissue>Mammary tumor</tissue>
    </source>
</reference>
<reference key="4">
    <citation type="journal article" date="2010" name="Cell">
        <title>A tissue-specific atlas of mouse protein phosphorylation and expression.</title>
        <authorList>
            <person name="Huttlin E.L."/>
            <person name="Jedrychowski M.P."/>
            <person name="Elias J.E."/>
            <person name="Goswami T."/>
            <person name="Rad R."/>
            <person name="Beausoleil S.A."/>
            <person name="Villen J."/>
            <person name="Haas W."/>
            <person name="Sowa M.E."/>
            <person name="Gygi S.P."/>
        </authorList>
    </citation>
    <scope>IDENTIFICATION BY MASS SPECTROMETRY [LARGE SCALE ANALYSIS]</scope>
    <source>
        <tissue>Brain</tissue>
        <tissue>Brown adipose tissue</tissue>
        <tissue>Heart</tissue>
        <tissue>Kidney</tissue>
        <tissue>Liver</tissue>
        <tissue>Lung</tissue>
        <tissue>Pancreas</tissue>
        <tissue>Testis</tissue>
    </source>
</reference>
<reference key="5">
    <citation type="journal article" date="2013" name="Mol. Cell">
        <title>SIRT5-mediated lysine desuccinylation impacts diverse metabolic pathways.</title>
        <authorList>
            <person name="Park J."/>
            <person name="Chen Y."/>
            <person name="Tishkoff D.X."/>
            <person name="Peng C."/>
            <person name="Tan M."/>
            <person name="Dai L."/>
            <person name="Xie Z."/>
            <person name="Zhang Y."/>
            <person name="Zwaans B.M."/>
            <person name="Skinner M.E."/>
            <person name="Lombard D.B."/>
            <person name="Zhao Y."/>
        </authorList>
    </citation>
    <scope>SUCCINYLATION [LARGE SCALE ANALYSIS] AT LYS-110</scope>
    <scope>IDENTIFICATION BY MASS SPECTROMETRY [LARGE SCALE ANALYSIS]</scope>
    <source>
        <tissue>Liver</tissue>
    </source>
</reference>
<dbReference type="EMBL" id="AK009166">
    <property type="protein sequence ID" value="BAB26117.1"/>
    <property type="molecule type" value="mRNA"/>
</dbReference>
<dbReference type="EMBL" id="AL845275">
    <property type="status" value="NOT_ANNOTATED_CDS"/>
    <property type="molecule type" value="Genomic_DNA"/>
</dbReference>
<dbReference type="EMBL" id="AL928735">
    <property type="status" value="NOT_ANNOTATED_CDS"/>
    <property type="molecule type" value="Genomic_DNA"/>
</dbReference>
<dbReference type="EMBL" id="BC002214">
    <property type="protein sequence ID" value="AAH02214.1"/>
    <property type="molecule type" value="mRNA"/>
</dbReference>
<dbReference type="EMBL" id="BC054365">
    <property type="protein sequence ID" value="AAH54365.1"/>
    <property type="molecule type" value="mRNA"/>
</dbReference>
<dbReference type="CCDS" id="CCDS15672.1"/>
<dbReference type="RefSeq" id="NP_077170.2">
    <property type="nucleotide sequence ID" value="NM_024208.4"/>
</dbReference>
<dbReference type="SMR" id="Q9D7J9"/>
<dbReference type="BioGRID" id="212484">
    <property type="interactions" value="2"/>
</dbReference>
<dbReference type="FunCoup" id="Q9D7J9">
    <property type="interactions" value="610"/>
</dbReference>
<dbReference type="STRING" id="10090.ENSMUSP00000037371"/>
<dbReference type="GlyGen" id="Q9D7J9">
    <property type="glycosylation" value="2 sites, 1 O-linked glycan (1 site)"/>
</dbReference>
<dbReference type="iPTMnet" id="Q9D7J9"/>
<dbReference type="PhosphoSitePlus" id="Q9D7J9"/>
<dbReference type="SwissPalm" id="Q9D7J9"/>
<dbReference type="jPOST" id="Q9D7J9"/>
<dbReference type="PaxDb" id="10090-ENSMUSP00000037371"/>
<dbReference type="PeptideAtlas" id="Q9D7J9"/>
<dbReference type="ProteomicsDB" id="277627"/>
<dbReference type="Pumba" id="Q9D7J9"/>
<dbReference type="Antibodypedia" id="24584">
    <property type="antibodies" value="33 antibodies from 14 providers"/>
</dbReference>
<dbReference type="Ensembl" id="ENSMUST00000042658.5">
    <property type="protein sequence ID" value="ENSMUSP00000037371.3"/>
    <property type="gene ID" value="ENSMUSG00000039063.6"/>
</dbReference>
<dbReference type="GeneID" id="67856"/>
<dbReference type="KEGG" id="mmu:67856"/>
<dbReference type="UCSC" id="uc008igi.1">
    <property type="organism name" value="mouse"/>
</dbReference>
<dbReference type="AGR" id="MGI:1915106"/>
<dbReference type="CTD" id="79746"/>
<dbReference type="MGI" id="MGI:1915106">
    <property type="gene designation" value="Echdc3"/>
</dbReference>
<dbReference type="VEuPathDB" id="HostDB:ENSMUSG00000039063"/>
<dbReference type="eggNOG" id="KOG1682">
    <property type="taxonomic scope" value="Eukaryota"/>
</dbReference>
<dbReference type="GeneTree" id="ENSGT00940000157926"/>
<dbReference type="HOGENOM" id="CLU_009834_7_3_1"/>
<dbReference type="InParanoid" id="Q9D7J9"/>
<dbReference type="OMA" id="SCDMVVC"/>
<dbReference type="OrthoDB" id="2139957at2759"/>
<dbReference type="PhylomeDB" id="Q9D7J9"/>
<dbReference type="TreeFam" id="TF313089"/>
<dbReference type="BioGRID-ORCS" id="67856">
    <property type="hits" value="1 hit in 77 CRISPR screens"/>
</dbReference>
<dbReference type="PRO" id="PR:Q9D7J9"/>
<dbReference type="Proteomes" id="UP000000589">
    <property type="component" value="Chromosome 2"/>
</dbReference>
<dbReference type="RNAct" id="Q9D7J9">
    <property type="molecule type" value="protein"/>
</dbReference>
<dbReference type="Bgee" id="ENSMUSG00000039063">
    <property type="expression patterns" value="Expressed in interventricular septum and 168 other cell types or tissues"/>
</dbReference>
<dbReference type="GO" id="GO:0005739">
    <property type="term" value="C:mitochondrion"/>
    <property type="evidence" value="ECO:0007005"/>
    <property type="project" value="MGI"/>
</dbReference>
<dbReference type="GO" id="GO:0004300">
    <property type="term" value="F:enoyl-CoA hydratase activity"/>
    <property type="evidence" value="ECO:0000250"/>
    <property type="project" value="UniProtKB"/>
</dbReference>
<dbReference type="GO" id="GO:0006631">
    <property type="term" value="P:fatty acid metabolic process"/>
    <property type="evidence" value="ECO:0000250"/>
    <property type="project" value="UniProtKB"/>
</dbReference>
<dbReference type="GO" id="GO:1900078">
    <property type="term" value="P:positive regulation of cellular response to insulin stimulus"/>
    <property type="evidence" value="ECO:0007669"/>
    <property type="project" value="Ensembl"/>
</dbReference>
<dbReference type="CDD" id="cd06558">
    <property type="entry name" value="crotonase-like"/>
    <property type="match status" value="1"/>
</dbReference>
<dbReference type="Gene3D" id="3.90.226.10">
    <property type="entry name" value="2-enoyl-CoA Hydratase, Chain A, domain 1"/>
    <property type="match status" value="1"/>
</dbReference>
<dbReference type="Gene3D" id="1.10.12.10">
    <property type="entry name" value="Lyase 2-enoyl-coa Hydratase, Chain A, domain 2"/>
    <property type="match status" value="1"/>
</dbReference>
<dbReference type="InterPro" id="IPR029045">
    <property type="entry name" value="ClpP/crotonase-like_dom_sf"/>
</dbReference>
<dbReference type="InterPro" id="IPR001753">
    <property type="entry name" value="Enoyl-CoA_hydra/iso"/>
</dbReference>
<dbReference type="InterPro" id="IPR014748">
    <property type="entry name" value="Enoyl-CoA_hydra_C"/>
</dbReference>
<dbReference type="InterPro" id="IPR052377">
    <property type="entry name" value="Mitochondrial_ECH-domain"/>
</dbReference>
<dbReference type="NCBIfam" id="NF006008">
    <property type="entry name" value="PRK08139.1"/>
    <property type="match status" value="1"/>
</dbReference>
<dbReference type="PANTHER" id="PTHR43602">
    <property type="match status" value="1"/>
</dbReference>
<dbReference type="PANTHER" id="PTHR43602:SF1">
    <property type="entry name" value="ENOYL-COA HYDRATASE DOMAIN-CONTAINING PROTEIN 3, MITOCHONDRIAL"/>
    <property type="match status" value="1"/>
</dbReference>
<dbReference type="Pfam" id="PF00378">
    <property type="entry name" value="ECH_1"/>
    <property type="match status" value="1"/>
</dbReference>
<dbReference type="SUPFAM" id="SSF52096">
    <property type="entry name" value="ClpP/crotonase"/>
    <property type="match status" value="1"/>
</dbReference>
<keyword id="KW-0276">Fatty acid metabolism</keyword>
<keyword id="KW-0443">Lipid metabolism</keyword>
<keyword id="KW-0496">Mitochondrion</keyword>
<keyword id="KW-1185">Reference proteome</keyword>
<keyword id="KW-0809">Transit peptide</keyword>
<feature type="transit peptide" description="Mitochondrion" evidence="2">
    <location>
        <begin position="1"/>
        <end position="66"/>
    </location>
</feature>
<feature type="chain" id="PRO_0000333216" description="Enoyl-CoA hydratase domain-containing protein 3, mitochondrial">
    <location>
        <begin position="67"/>
        <end position="300"/>
    </location>
</feature>
<feature type="region of interest" description="Disordered" evidence="3">
    <location>
        <begin position="34"/>
        <end position="53"/>
    </location>
</feature>
<feature type="modified residue" description="N6-succinyllysine" evidence="6">
    <location>
        <position position="110"/>
    </location>
</feature>
<feature type="sequence conflict" description="In Ref. 3; AAH02214." evidence="4" ref="3">
    <original>T</original>
    <variation>M</variation>
    <location>
        <position position="50"/>
    </location>
</feature>
<feature type="sequence conflict" description="In Ref. 3; AAH02214." evidence="4" ref="3">
    <original>E</original>
    <variation>G</variation>
    <location>
        <position position="227"/>
    </location>
</feature>
<sequence>MAVVAGLRAFGVKWPSWLRRNPWAPLSAGFCSPGSAGPAGSESEPRLTSTRQQDGIRNIVLSNPRRRNALSLAMLKSLRSDILHEAESEDLKVIIISAEGPVFSSGHDLKELTDAQGRDYHAEVFQTCSEVMMLIRNHPVPILAMVNGLATAAGCQLVASCDIAVASDKSSFATPGVNVGLFCSTPAVALGRAVPRKVALEMLFTGEPISAQEALRHGLISKVVPEEQLEAETMRIAKKISSLSRSVVALGKATFYKQLPQDLRTAYFLASQAMVDNLALQDGQEGIEAFIQKRKPIWSH</sequence>
<proteinExistence type="evidence at protein level"/>
<protein>
    <recommendedName>
        <fullName evidence="4">Enoyl-CoA hydratase domain-containing protein 3, mitochondrial</fullName>
    </recommendedName>
</protein>
<gene>
    <name evidence="5" type="primary">Echdc3</name>
</gene>
<name>ECHD3_MOUSE</name>
<comment type="function">
    <text evidence="1">May play a role in fatty acid biosynthesis and insulin sensitivity.</text>
</comment>
<comment type="subcellular location">
    <subcellularLocation>
        <location evidence="4">Mitochondrion</location>
    </subcellularLocation>
</comment>
<comment type="similarity">
    <text evidence="4">Belongs to the enoyl-CoA hydratase/isomerase family.</text>
</comment>
<evidence type="ECO:0000250" key="1">
    <source>
        <dbReference type="UniProtKB" id="Q96DC8"/>
    </source>
</evidence>
<evidence type="ECO:0000255" key="2"/>
<evidence type="ECO:0000256" key="3">
    <source>
        <dbReference type="SAM" id="MobiDB-lite"/>
    </source>
</evidence>
<evidence type="ECO:0000305" key="4"/>
<evidence type="ECO:0000312" key="5">
    <source>
        <dbReference type="MGI" id="MGI:1915106"/>
    </source>
</evidence>
<evidence type="ECO:0007744" key="6">
    <source>
    </source>
</evidence>